<name>NEKL2_CAEEL</name>
<comment type="function">
    <text evidence="4">Probable serine/threonine-protein kinase required for the completion of molting. May play a role in endocytosis in the hypodermis syncytium.</text>
</comment>
<comment type="catalytic activity">
    <reaction evidence="1">
        <text>L-seryl-[protein] + ATP = O-phospho-L-seryl-[protein] + ADP + H(+)</text>
        <dbReference type="Rhea" id="RHEA:17989"/>
        <dbReference type="Rhea" id="RHEA-COMP:9863"/>
        <dbReference type="Rhea" id="RHEA-COMP:11604"/>
        <dbReference type="ChEBI" id="CHEBI:15378"/>
        <dbReference type="ChEBI" id="CHEBI:29999"/>
        <dbReference type="ChEBI" id="CHEBI:30616"/>
        <dbReference type="ChEBI" id="CHEBI:83421"/>
        <dbReference type="ChEBI" id="CHEBI:456216"/>
        <dbReference type="EC" id="2.7.11.1"/>
    </reaction>
</comment>
<comment type="catalytic activity">
    <reaction evidence="1">
        <text>L-threonyl-[protein] + ATP = O-phospho-L-threonyl-[protein] + ADP + H(+)</text>
        <dbReference type="Rhea" id="RHEA:46608"/>
        <dbReference type="Rhea" id="RHEA-COMP:11060"/>
        <dbReference type="Rhea" id="RHEA-COMP:11605"/>
        <dbReference type="ChEBI" id="CHEBI:15378"/>
        <dbReference type="ChEBI" id="CHEBI:30013"/>
        <dbReference type="ChEBI" id="CHEBI:30616"/>
        <dbReference type="ChEBI" id="CHEBI:61977"/>
        <dbReference type="ChEBI" id="CHEBI:456216"/>
        <dbReference type="EC" id="2.7.11.1"/>
    </reaction>
</comment>
<comment type="cofactor">
    <cofactor evidence="1">
        <name>Mg(2+)</name>
        <dbReference type="ChEBI" id="CHEBI:18420"/>
    </cofactor>
</comment>
<comment type="subcellular location">
    <subcellularLocation>
        <location evidence="4">Cytoplasm</location>
    </subcellularLocation>
    <text evidence="4">In hyp7 syncytium, localizes in puncta and small tubules near the plasma membrane apical region. Does not co-localize with nekl-3.</text>
</comment>
<comment type="tissue specificity">
    <text evidence="4">Expressed in hypodermal cells including in hyp7 syncytium but not in seam cells.</text>
</comment>
<comment type="disruption phenotype">
    <text evidence="4">Failure to shed the cuticle at the end of the first molt resulting in an arrest at the L1 to L2 transition stage. RNAi-mediated knockdown results in a less severe phenotype characterized by a failure to shed the cuticle only in the middle part of the body at the end of the first molt. In hyp7 syncytium, RNAi-mediated knockdown results in the apical membrane accumulation of lrp-1 and mislocalization of several components of the endocytic machinery.</text>
</comment>
<comment type="similarity">
    <text evidence="5">Belongs to the protein kinase superfamily. NEK Ser/Thr protein kinase family. NIMA subfamily.</text>
</comment>
<protein>
    <recommendedName>
        <fullName evidence="5">Serine/threonine-protein kinase nekl-2</fullName>
        <ecNumber evidence="1">2.7.11.1</ecNumber>
    </recommendedName>
    <alternativeName>
        <fullName evidence="6">Never in mitosis A kinase-like 2</fullName>
        <shortName evidence="5">NimA-kinase-like 2</shortName>
    </alternativeName>
</protein>
<sequence length="357" mass="40504">MDNYEKVRVVGRGAFGVCWLCRGKNDASHQKVIIKLINTHGMTEKEENSIQSEVNLLKKVQHPLIIGYIDSFIMDNQLGIVMQYAEGGTLERLINDQRAIKDSNMREYFPEKTVLDYFTQILIALNHMHQKNIVHRDLKPQNILMNRRKTVLKLSDFGISKELGTKSAASTVIGTPNYLSPEICESRPYNQKSDMWSLGCVLYELLQLERAFDGENLPAIVMKITRSKQNPLGDHVSNDVKMLVENLLKTHTDKRPDVSQLLSDPLVLPYLISIHCDLGRIEPPPTDKRKPSASLSSRLRTYPTQSTLRPYSLSSNAPTTHLTQLTPMPSHIDSGFFSSGRTSNQRTQSRSQVHSKY</sequence>
<accession>O01775</accession>
<gene>
    <name evidence="8" type="primary">nekl-2</name>
    <name evidence="8" type="ORF">ZC581.1</name>
</gene>
<evidence type="ECO:0000250" key="1">
    <source>
        <dbReference type="UniProtKB" id="Q9HC98"/>
    </source>
</evidence>
<evidence type="ECO:0000255" key="2">
    <source>
        <dbReference type="PROSITE-ProRule" id="PRU00159"/>
    </source>
</evidence>
<evidence type="ECO:0000256" key="3">
    <source>
        <dbReference type="SAM" id="MobiDB-lite"/>
    </source>
</evidence>
<evidence type="ECO:0000269" key="4">
    <source>
    </source>
</evidence>
<evidence type="ECO:0000305" key="5"/>
<evidence type="ECO:0000305" key="6">
    <source>
    </source>
</evidence>
<evidence type="ECO:0000312" key="7">
    <source>
        <dbReference type="Proteomes" id="UP000001940"/>
    </source>
</evidence>
<evidence type="ECO:0000312" key="8">
    <source>
        <dbReference type="WormBase" id="ZC581.1"/>
    </source>
</evidence>
<reference evidence="7" key="1">
    <citation type="journal article" date="1998" name="Science">
        <title>Genome sequence of the nematode C. elegans: a platform for investigating biology.</title>
        <authorList>
            <consortium name="The C. elegans sequencing consortium"/>
        </authorList>
    </citation>
    <scope>NUCLEOTIDE SEQUENCE [LARGE SCALE GENOMIC DNA]</scope>
    <source>
        <strain evidence="7">Bristol N2</strain>
    </source>
</reference>
<reference evidence="5" key="2">
    <citation type="journal article" date="2015" name="Dev. Biol.">
        <title>C. elegans NIMA-related kinases NEKL-2 and NEKL-3 are required for the completion of molting.</title>
        <authorList>
            <person name="Yochem J."/>
            <person name="Lazetic V."/>
            <person name="Bell L."/>
            <person name="Chen L."/>
            <person name="Fay D."/>
        </authorList>
    </citation>
    <scope>FUNCTION</scope>
    <scope>SUBCELLULAR LOCATION</scope>
    <scope>TISSUE SPECIFICITY</scope>
    <scope>DISRUPTION PHENOTYPE</scope>
</reference>
<feature type="chain" id="PRO_0000433008" description="Serine/threonine-protein kinase nekl-2">
    <location>
        <begin position="1"/>
        <end position="357"/>
    </location>
</feature>
<feature type="domain" description="Protein kinase" evidence="2">
    <location>
        <begin position="4"/>
        <end position="267"/>
    </location>
</feature>
<feature type="region of interest" description="Disordered" evidence="3">
    <location>
        <begin position="281"/>
        <end position="357"/>
    </location>
</feature>
<feature type="compositionally biased region" description="Basic and acidic residues" evidence="3">
    <location>
        <begin position="281"/>
        <end position="290"/>
    </location>
</feature>
<feature type="compositionally biased region" description="Polar residues" evidence="3">
    <location>
        <begin position="293"/>
        <end position="327"/>
    </location>
</feature>
<feature type="compositionally biased region" description="Polar residues" evidence="3">
    <location>
        <begin position="336"/>
        <end position="357"/>
    </location>
</feature>
<feature type="active site" description="Proton acceptor" evidence="2">
    <location>
        <position position="137"/>
    </location>
</feature>
<feature type="binding site" evidence="2">
    <location>
        <begin position="10"/>
        <end position="18"/>
    </location>
    <ligand>
        <name>ATP</name>
        <dbReference type="ChEBI" id="CHEBI:30616"/>
    </ligand>
</feature>
<feature type="binding site" evidence="2">
    <location>
        <position position="35"/>
    </location>
    <ligand>
        <name>ATP</name>
        <dbReference type="ChEBI" id="CHEBI:30616"/>
    </ligand>
</feature>
<proteinExistence type="evidence at transcript level"/>
<keyword id="KW-0067">ATP-binding</keyword>
<keyword id="KW-0963">Cytoplasm</keyword>
<keyword id="KW-0217">Developmental protein</keyword>
<keyword id="KW-0418">Kinase</keyword>
<keyword id="KW-0460">Magnesium</keyword>
<keyword id="KW-0479">Metal-binding</keyword>
<keyword id="KW-0547">Nucleotide-binding</keyword>
<keyword id="KW-1185">Reference proteome</keyword>
<keyword id="KW-0723">Serine/threonine-protein kinase</keyword>
<keyword id="KW-0808">Transferase</keyword>
<dbReference type="EC" id="2.7.11.1" evidence="1"/>
<dbReference type="EMBL" id="FO080589">
    <property type="protein sequence ID" value="CCD64899.1"/>
    <property type="molecule type" value="Genomic_DNA"/>
</dbReference>
<dbReference type="PIR" id="T29771">
    <property type="entry name" value="T29771"/>
</dbReference>
<dbReference type="RefSeq" id="NP_491914.1">
    <property type="nucleotide sequence ID" value="NM_059513.6"/>
</dbReference>
<dbReference type="SMR" id="O01775"/>
<dbReference type="DIP" id="DIP-24804N"/>
<dbReference type="FunCoup" id="O01775">
    <property type="interactions" value="383"/>
</dbReference>
<dbReference type="IntAct" id="O01775">
    <property type="interactions" value="1"/>
</dbReference>
<dbReference type="STRING" id="6239.ZC581.1.1"/>
<dbReference type="PaxDb" id="6239-ZC581.1"/>
<dbReference type="PeptideAtlas" id="O01775"/>
<dbReference type="EnsemblMetazoa" id="ZC581.1.1">
    <property type="protein sequence ID" value="ZC581.1.1"/>
    <property type="gene ID" value="WBGene00022631"/>
</dbReference>
<dbReference type="GeneID" id="191199"/>
<dbReference type="KEGG" id="cel:CELE_ZC581.1"/>
<dbReference type="UCSC" id="ZC581.1">
    <property type="organism name" value="c. elegans"/>
</dbReference>
<dbReference type="AGR" id="WB:WBGene00022631"/>
<dbReference type="CTD" id="191199"/>
<dbReference type="WormBase" id="ZC581.1">
    <property type="protein sequence ID" value="CE15235"/>
    <property type="gene ID" value="WBGene00022631"/>
    <property type="gene designation" value="nekl-2"/>
</dbReference>
<dbReference type="eggNOG" id="KOG0589">
    <property type="taxonomic scope" value="Eukaryota"/>
</dbReference>
<dbReference type="GeneTree" id="ENSGT00940000170273"/>
<dbReference type="HOGENOM" id="CLU_000288_63_23_1"/>
<dbReference type="InParanoid" id="O01775"/>
<dbReference type="OMA" id="YKCHYGE"/>
<dbReference type="OrthoDB" id="248923at2759"/>
<dbReference type="PhylomeDB" id="O01775"/>
<dbReference type="PRO" id="PR:O01775"/>
<dbReference type="Proteomes" id="UP000001940">
    <property type="component" value="Chromosome I"/>
</dbReference>
<dbReference type="Bgee" id="WBGene00022631">
    <property type="expression patterns" value="Expressed in material anatomical entity and 3 other cell types or tissues"/>
</dbReference>
<dbReference type="GO" id="GO:0005737">
    <property type="term" value="C:cytoplasm"/>
    <property type="evidence" value="ECO:0007669"/>
    <property type="project" value="UniProtKB-SubCell"/>
</dbReference>
<dbReference type="GO" id="GO:0005634">
    <property type="term" value="C:nucleus"/>
    <property type="evidence" value="ECO:0000318"/>
    <property type="project" value="GO_Central"/>
</dbReference>
<dbReference type="GO" id="GO:0005524">
    <property type="term" value="F:ATP binding"/>
    <property type="evidence" value="ECO:0007669"/>
    <property type="project" value="UniProtKB-KW"/>
</dbReference>
<dbReference type="GO" id="GO:0046872">
    <property type="term" value="F:metal ion binding"/>
    <property type="evidence" value="ECO:0007669"/>
    <property type="project" value="UniProtKB-KW"/>
</dbReference>
<dbReference type="GO" id="GO:0106310">
    <property type="term" value="F:protein serine kinase activity"/>
    <property type="evidence" value="ECO:0007669"/>
    <property type="project" value="RHEA"/>
</dbReference>
<dbReference type="GO" id="GO:0004674">
    <property type="term" value="F:protein serine/threonine kinase activity"/>
    <property type="evidence" value="ECO:0000318"/>
    <property type="project" value="GO_Central"/>
</dbReference>
<dbReference type="GO" id="GO:0042303">
    <property type="term" value="P:molting cycle"/>
    <property type="evidence" value="ECO:0000315"/>
    <property type="project" value="UniProtKB"/>
</dbReference>
<dbReference type="GO" id="GO:0045807">
    <property type="term" value="P:positive regulation of endocytosis"/>
    <property type="evidence" value="ECO:0000315"/>
    <property type="project" value="UniProtKB"/>
</dbReference>
<dbReference type="CDD" id="cd08215">
    <property type="entry name" value="STKc_Nek"/>
    <property type="match status" value="1"/>
</dbReference>
<dbReference type="FunFam" id="1.10.510.10:FF:000869">
    <property type="entry name" value="Nek protein kinase"/>
    <property type="match status" value="1"/>
</dbReference>
<dbReference type="FunFam" id="3.30.200.20:FF:000631">
    <property type="entry name" value="Serine/threonine-protein kinase NEK"/>
    <property type="match status" value="1"/>
</dbReference>
<dbReference type="Gene3D" id="3.30.200.20">
    <property type="entry name" value="Phosphorylase Kinase, domain 1"/>
    <property type="match status" value="1"/>
</dbReference>
<dbReference type="Gene3D" id="1.10.510.10">
    <property type="entry name" value="Transferase(Phosphotransferase) domain 1"/>
    <property type="match status" value="1"/>
</dbReference>
<dbReference type="InterPro" id="IPR011009">
    <property type="entry name" value="Kinase-like_dom_sf"/>
</dbReference>
<dbReference type="InterPro" id="IPR051131">
    <property type="entry name" value="NEK_Ser/Thr_kinase_NIMA"/>
</dbReference>
<dbReference type="InterPro" id="IPR000719">
    <property type="entry name" value="Prot_kinase_dom"/>
</dbReference>
<dbReference type="InterPro" id="IPR017441">
    <property type="entry name" value="Protein_kinase_ATP_BS"/>
</dbReference>
<dbReference type="InterPro" id="IPR008271">
    <property type="entry name" value="Ser/Thr_kinase_AS"/>
</dbReference>
<dbReference type="PANTHER" id="PTHR44899">
    <property type="entry name" value="CAMK FAMILY PROTEIN KINASE"/>
    <property type="match status" value="1"/>
</dbReference>
<dbReference type="PANTHER" id="PTHR44899:SF3">
    <property type="entry name" value="SERINE_THREONINE-PROTEIN KINASE NEK1"/>
    <property type="match status" value="1"/>
</dbReference>
<dbReference type="Pfam" id="PF00069">
    <property type="entry name" value="Pkinase"/>
    <property type="match status" value="1"/>
</dbReference>
<dbReference type="SMART" id="SM00220">
    <property type="entry name" value="S_TKc"/>
    <property type="match status" value="1"/>
</dbReference>
<dbReference type="SUPFAM" id="SSF56112">
    <property type="entry name" value="Protein kinase-like (PK-like)"/>
    <property type="match status" value="1"/>
</dbReference>
<dbReference type="PROSITE" id="PS00107">
    <property type="entry name" value="PROTEIN_KINASE_ATP"/>
    <property type="match status" value="1"/>
</dbReference>
<dbReference type="PROSITE" id="PS50011">
    <property type="entry name" value="PROTEIN_KINASE_DOM"/>
    <property type="match status" value="1"/>
</dbReference>
<dbReference type="PROSITE" id="PS00108">
    <property type="entry name" value="PROTEIN_KINASE_ST"/>
    <property type="match status" value="1"/>
</dbReference>
<organism evidence="7">
    <name type="scientific">Caenorhabditis elegans</name>
    <dbReference type="NCBI Taxonomy" id="6239"/>
    <lineage>
        <taxon>Eukaryota</taxon>
        <taxon>Metazoa</taxon>
        <taxon>Ecdysozoa</taxon>
        <taxon>Nematoda</taxon>
        <taxon>Chromadorea</taxon>
        <taxon>Rhabditida</taxon>
        <taxon>Rhabditina</taxon>
        <taxon>Rhabditomorpha</taxon>
        <taxon>Rhabditoidea</taxon>
        <taxon>Rhabditidae</taxon>
        <taxon>Peloderinae</taxon>
        <taxon>Caenorhabditis</taxon>
    </lineage>
</organism>